<proteinExistence type="inferred from homology"/>
<name>U64_CONCL</name>
<accession>D6C4L1</accession>
<sequence>MTLTFLLVVALCMLTTCHTENYRDSQKVSPVRSIGKTQFARSLRLSERYCVPKSGLCTIFQPGKCCSGWCLIYRCT</sequence>
<evidence type="ECO:0000250" key="1"/>
<evidence type="ECO:0000255" key="2"/>
<comment type="subcellular location">
    <subcellularLocation>
        <location evidence="1">Secreted</location>
    </subcellularLocation>
</comment>
<comment type="tissue specificity">
    <text>Expressed by the venom duct.</text>
</comment>
<comment type="domain">
    <text evidence="1">The presence of a 'disulfide through disulfide knot' structurally defines this protein as a knottin.</text>
</comment>
<comment type="domain">
    <text>The cysteine framework is VI/VII (C-C-CC-C-C).</text>
</comment>
<reference key="1">
    <citation type="journal article" date="2010" name="Mol. Phylogenet. Evol.">
        <title>Evolution of Conus peptide toxins: analysis of Conus californicus Reeve, 1844.</title>
        <authorList>
            <person name="Biggs J.S."/>
            <person name="Watkins M."/>
            <person name="Puillandre N."/>
            <person name="Ownby J.P."/>
            <person name="Lopez-Vera E."/>
            <person name="Christensen S."/>
            <person name="Moreno K.J."/>
            <person name="Bernaldez J."/>
            <person name="Licea-Navarro A."/>
            <person name="Corneli P.S."/>
            <person name="Olivera B.M."/>
        </authorList>
    </citation>
    <scope>NUCLEOTIDE SEQUENCE [GENOMIC DNA]</scope>
</reference>
<feature type="signal peptide" evidence="2">
    <location>
        <begin position="1"/>
        <end position="19"/>
    </location>
</feature>
<feature type="propeptide" id="PRO_0000414977" evidence="1">
    <location>
        <begin position="20"/>
        <end position="47"/>
    </location>
</feature>
<feature type="peptide" id="PRO_0000414978" description="Conotoxin Cl6.4">
    <location>
        <begin position="49"/>
        <end position="76"/>
    </location>
</feature>
<feature type="disulfide bond" evidence="1">
    <location>
        <begin position="50"/>
        <end position="66"/>
    </location>
</feature>
<feature type="disulfide bond" evidence="1">
    <location>
        <begin position="57"/>
        <end position="70"/>
    </location>
</feature>
<feature type="disulfide bond" evidence="1">
    <location>
        <begin position="65"/>
        <end position="75"/>
    </location>
</feature>
<protein>
    <recommendedName>
        <fullName>Conotoxin Cl6.4</fullName>
    </recommendedName>
</protein>
<dbReference type="EMBL" id="FJ959153">
    <property type="protein sequence ID" value="ADB93123.1"/>
    <property type="molecule type" value="Genomic_DNA"/>
</dbReference>
<dbReference type="ConoServer" id="4037">
    <property type="toxin name" value="Cal6.42 precursor"/>
</dbReference>
<dbReference type="GO" id="GO:0005576">
    <property type="term" value="C:extracellular region"/>
    <property type="evidence" value="ECO:0007669"/>
    <property type="project" value="UniProtKB-SubCell"/>
</dbReference>
<dbReference type="GO" id="GO:0008200">
    <property type="term" value="F:ion channel inhibitor activity"/>
    <property type="evidence" value="ECO:0007669"/>
    <property type="project" value="InterPro"/>
</dbReference>
<dbReference type="GO" id="GO:0090729">
    <property type="term" value="F:toxin activity"/>
    <property type="evidence" value="ECO:0007669"/>
    <property type="project" value="UniProtKB-KW"/>
</dbReference>
<dbReference type="InterPro" id="IPR004214">
    <property type="entry name" value="Conotoxin"/>
</dbReference>
<dbReference type="Pfam" id="PF02950">
    <property type="entry name" value="Conotoxin"/>
    <property type="match status" value="1"/>
</dbReference>
<keyword id="KW-1015">Disulfide bond</keyword>
<keyword id="KW-0960">Knottin</keyword>
<keyword id="KW-0528">Neurotoxin</keyword>
<keyword id="KW-0964">Secreted</keyword>
<keyword id="KW-0732">Signal</keyword>
<keyword id="KW-0800">Toxin</keyword>
<organism>
    <name type="scientific">Californiconus californicus</name>
    <name type="common">California cone</name>
    <name type="synonym">Conus californicus</name>
    <dbReference type="NCBI Taxonomy" id="1736779"/>
    <lineage>
        <taxon>Eukaryota</taxon>
        <taxon>Metazoa</taxon>
        <taxon>Spiralia</taxon>
        <taxon>Lophotrochozoa</taxon>
        <taxon>Mollusca</taxon>
        <taxon>Gastropoda</taxon>
        <taxon>Caenogastropoda</taxon>
        <taxon>Neogastropoda</taxon>
        <taxon>Conoidea</taxon>
        <taxon>Conidae</taxon>
        <taxon>Californiconus</taxon>
    </lineage>
</organism>